<evidence type="ECO:0000255" key="1">
    <source>
        <dbReference type="HAMAP-Rule" id="MF_00006"/>
    </source>
</evidence>
<protein>
    <recommendedName>
        <fullName evidence="1">Argininosuccinate lyase</fullName>
        <shortName evidence="1">ASAL</shortName>
        <ecNumber evidence="1">4.3.2.1</ecNumber>
    </recommendedName>
    <alternativeName>
        <fullName evidence="1">Arginosuccinase</fullName>
    </alternativeName>
</protein>
<reference key="1">
    <citation type="journal article" date="2011" name="J. Bacteriol.">
        <title>Comparative genomics of 28 Salmonella enterica isolates: evidence for CRISPR-mediated adaptive sublineage evolution.</title>
        <authorList>
            <person name="Fricke W.F."/>
            <person name="Mammel M.K."/>
            <person name="McDermott P.F."/>
            <person name="Tartera C."/>
            <person name="White D.G."/>
            <person name="Leclerc J.E."/>
            <person name="Ravel J."/>
            <person name="Cebula T.A."/>
        </authorList>
    </citation>
    <scope>NUCLEOTIDE SEQUENCE [LARGE SCALE GENOMIC DNA]</scope>
    <source>
        <strain>CVM19633</strain>
    </source>
</reference>
<sequence length="458" mass="50542">MALWGGRFTQAADQRFKQFNDSLRFDYRLAEQDIVGSVAWSKALVTVGVLTADEQRQLEEALNVLLEEVRANPQQILQSDAEDIHSWVEGKLIDKVGQLGKKLHTGRSRNDQVATDLKLWCKETVRELLTANRQLQSALVETAQANQDAVMPGYTHLQRAQPVTFAHWCLAYVEMLARDESRLQDTLKRLDVSPLGCGALAGTAYEIDREQLAGWLGFTSATRNSLDSVSDRDHVLELLSDAAIGMVHLSRFAEDLIFFNSGEAGFVELSDRVTSGSSLMPQKKNPDALELIRGKCGRVQGALTGMMMTLKGLPLAYNKDMQEDKEGLFDALDTWLDCLHMAALVLDGIQVKRLRCQDAAQQGYANATELADYLVAKGVPFREAHHIVGEAVVEAIRQGKPLEALPLADLQKFSRVIGDDVYPILSLQSCLDKRAAKGGVSPQQVAQAIDDARARLAL</sequence>
<organism>
    <name type="scientific">Salmonella schwarzengrund (strain CVM19633)</name>
    <dbReference type="NCBI Taxonomy" id="439843"/>
    <lineage>
        <taxon>Bacteria</taxon>
        <taxon>Pseudomonadati</taxon>
        <taxon>Pseudomonadota</taxon>
        <taxon>Gammaproteobacteria</taxon>
        <taxon>Enterobacterales</taxon>
        <taxon>Enterobacteriaceae</taxon>
        <taxon>Salmonella</taxon>
    </lineage>
</organism>
<dbReference type="EC" id="4.3.2.1" evidence="1"/>
<dbReference type="EMBL" id="CP001127">
    <property type="protein sequence ID" value="ACF89760.1"/>
    <property type="molecule type" value="Genomic_DNA"/>
</dbReference>
<dbReference type="RefSeq" id="WP_001230050.1">
    <property type="nucleotide sequence ID" value="NC_011094.1"/>
</dbReference>
<dbReference type="SMR" id="B4TQH6"/>
<dbReference type="KEGG" id="sew:SeSA_A4333"/>
<dbReference type="HOGENOM" id="CLU_027272_2_3_6"/>
<dbReference type="UniPathway" id="UPA00068">
    <property type="reaction ID" value="UER00114"/>
</dbReference>
<dbReference type="Proteomes" id="UP000001865">
    <property type="component" value="Chromosome"/>
</dbReference>
<dbReference type="GO" id="GO:0005829">
    <property type="term" value="C:cytosol"/>
    <property type="evidence" value="ECO:0007669"/>
    <property type="project" value="TreeGrafter"/>
</dbReference>
<dbReference type="GO" id="GO:0004056">
    <property type="term" value="F:argininosuccinate lyase activity"/>
    <property type="evidence" value="ECO:0007669"/>
    <property type="project" value="UniProtKB-UniRule"/>
</dbReference>
<dbReference type="GO" id="GO:0042450">
    <property type="term" value="P:arginine biosynthetic process via ornithine"/>
    <property type="evidence" value="ECO:0007669"/>
    <property type="project" value="InterPro"/>
</dbReference>
<dbReference type="GO" id="GO:0006526">
    <property type="term" value="P:L-arginine biosynthetic process"/>
    <property type="evidence" value="ECO:0007669"/>
    <property type="project" value="UniProtKB-UniRule"/>
</dbReference>
<dbReference type="CDD" id="cd01359">
    <property type="entry name" value="Argininosuccinate_lyase"/>
    <property type="match status" value="1"/>
</dbReference>
<dbReference type="FunFam" id="1.10.275.10:FF:000004">
    <property type="entry name" value="Argininosuccinate lyase"/>
    <property type="match status" value="1"/>
</dbReference>
<dbReference type="FunFam" id="1.10.40.30:FF:000001">
    <property type="entry name" value="Argininosuccinate lyase"/>
    <property type="match status" value="1"/>
</dbReference>
<dbReference type="FunFam" id="1.20.200.10:FF:000006">
    <property type="entry name" value="Argininosuccinate lyase"/>
    <property type="match status" value="1"/>
</dbReference>
<dbReference type="Gene3D" id="1.10.40.30">
    <property type="entry name" value="Fumarase/aspartase (C-terminal domain)"/>
    <property type="match status" value="1"/>
</dbReference>
<dbReference type="Gene3D" id="1.20.200.10">
    <property type="entry name" value="Fumarase/aspartase (Central domain)"/>
    <property type="match status" value="1"/>
</dbReference>
<dbReference type="Gene3D" id="1.10.275.10">
    <property type="entry name" value="Fumarase/aspartase (N-terminal domain)"/>
    <property type="match status" value="1"/>
</dbReference>
<dbReference type="HAMAP" id="MF_00006">
    <property type="entry name" value="Arg_succ_lyase"/>
    <property type="match status" value="1"/>
</dbReference>
<dbReference type="InterPro" id="IPR029419">
    <property type="entry name" value="Arg_succ_lyase_C"/>
</dbReference>
<dbReference type="InterPro" id="IPR009049">
    <property type="entry name" value="Argininosuccinate_lyase"/>
</dbReference>
<dbReference type="InterPro" id="IPR024083">
    <property type="entry name" value="Fumarase/histidase_N"/>
</dbReference>
<dbReference type="InterPro" id="IPR020557">
    <property type="entry name" value="Fumarate_lyase_CS"/>
</dbReference>
<dbReference type="InterPro" id="IPR000362">
    <property type="entry name" value="Fumarate_lyase_fam"/>
</dbReference>
<dbReference type="InterPro" id="IPR022761">
    <property type="entry name" value="Fumarate_lyase_N"/>
</dbReference>
<dbReference type="InterPro" id="IPR008948">
    <property type="entry name" value="L-Aspartase-like"/>
</dbReference>
<dbReference type="NCBIfam" id="TIGR00838">
    <property type="entry name" value="argH"/>
    <property type="match status" value="1"/>
</dbReference>
<dbReference type="NCBIfam" id="NF008964">
    <property type="entry name" value="PRK12308.1"/>
    <property type="match status" value="1"/>
</dbReference>
<dbReference type="PANTHER" id="PTHR43814">
    <property type="entry name" value="ARGININOSUCCINATE LYASE"/>
    <property type="match status" value="1"/>
</dbReference>
<dbReference type="PANTHER" id="PTHR43814:SF1">
    <property type="entry name" value="ARGININOSUCCINATE LYASE"/>
    <property type="match status" value="1"/>
</dbReference>
<dbReference type="Pfam" id="PF14698">
    <property type="entry name" value="ASL_C2"/>
    <property type="match status" value="1"/>
</dbReference>
<dbReference type="Pfam" id="PF00206">
    <property type="entry name" value="Lyase_1"/>
    <property type="match status" value="1"/>
</dbReference>
<dbReference type="PRINTS" id="PR00145">
    <property type="entry name" value="ARGSUCLYASE"/>
</dbReference>
<dbReference type="PRINTS" id="PR00149">
    <property type="entry name" value="FUMRATELYASE"/>
</dbReference>
<dbReference type="SUPFAM" id="SSF48557">
    <property type="entry name" value="L-aspartase-like"/>
    <property type="match status" value="1"/>
</dbReference>
<dbReference type="PROSITE" id="PS00163">
    <property type="entry name" value="FUMARATE_LYASES"/>
    <property type="match status" value="1"/>
</dbReference>
<keyword id="KW-0028">Amino-acid biosynthesis</keyword>
<keyword id="KW-0055">Arginine biosynthesis</keyword>
<keyword id="KW-0963">Cytoplasm</keyword>
<keyword id="KW-0456">Lyase</keyword>
<accession>B4TQH6</accession>
<feature type="chain" id="PRO_1000089116" description="Argininosuccinate lyase">
    <location>
        <begin position="1"/>
        <end position="458"/>
    </location>
</feature>
<gene>
    <name evidence="1" type="primary">argH</name>
    <name type="ordered locus">SeSA_A4333</name>
</gene>
<name>ARLY_SALSV</name>
<proteinExistence type="inferred from homology"/>
<comment type="catalytic activity">
    <reaction evidence="1">
        <text>2-(N(omega)-L-arginino)succinate = fumarate + L-arginine</text>
        <dbReference type="Rhea" id="RHEA:24020"/>
        <dbReference type="ChEBI" id="CHEBI:29806"/>
        <dbReference type="ChEBI" id="CHEBI:32682"/>
        <dbReference type="ChEBI" id="CHEBI:57472"/>
        <dbReference type="EC" id="4.3.2.1"/>
    </reaction>
</comment>
<comment type="pathway">
    <text evidence="1">Amino-acid biosynthesis; L-arginine biosynthesis; L-arginine from L-ornithine and carbamoyl phosphate: step 3/3.</text>
</comment>
<comment type="subcellular location">
    <subcellularLocation>
        <location evidence="1">Cytoplasm</location>
    </subcellularLocation>
</comment>
<comment type="similarity">
    <text evidence="1">Belongs to the lyase 1 family. Argininosuccinate lyase subfamily.</text>
</comment>